<organismHost>
    <name type="scientific">Escherichia coli</name>
    <dbReference type="NCBI Taxonomy" id="562"/>
</organismHost>
<proteinExistence type="evidence at protein level"/>
<comment type="function">
    <text evidence="1">Protease involved in virion assembly and maturation.</text>
</comment>
<comment type="interaction">
    <interactant intactId="EBI-16087766">
        <id>P49860</id>
    </interactant>
    <interactant intactId="EBI-15611310">
        <id>P49861</id>
        <label>5</label>
    </interactant>
    <organismsDiffer>false</organismsDiffer>
    <experiments>3</experiments>
</comment>
<comment type="subcellular location">
    <subcellularLocation>
        <location evidence="1">Virion</location>
    </subcellularLocation>
    <text evidence="1">Present in the capsid.</text>
</comment>
<comment type="PTM">
    <text evidence="1">Cleaves itself autocatalytically to yield the mature form of the protease.</text>
</comment>
<comment type="similarity">
    <text evidence="2">Belongs to the HK97 prohead protease protein family.</text>
</comment>
<protein>
    <recommendedName>
        <fullName evidence="1">Prohead protease</fullName>
    </recommendedName>
    <alternativeName>
        <fullName>GP4</fullName>
    </alternativeName>
</protein>
<organism>
    <name type="scientific">Enterobacteria phage HK97</name>
    <name type="common">Bacteriophage HK97</name>
    <dbReference type="NCBI Taxonomy" id="2681617"/>
    <lineage>
        <taxon>Viruses</taxon>
        <taxon>Duplodnaviria</taxon>
        <taxon>Heunggongvirae</taxon>
        <taxon>Uroviricota</taxon>
        <taxon>Caudoviricetes</taxon>
        <taxon>Hendrixvirinae</taxon>
        <taxon>Byrnievirus</taxon>
        <taxon>Byrnievirus HK97</taxon>
    </lineage>
</organism>
<sequence>MPEIVKTLSFDETEIKFTGDGKQGIFEGYASVFNNTDSDGDIILPGAFKNALANQTRKVAMFFNHKTWELPVGKWDSLAEDEKGLYVRGQLTPGHSGAADLKAAMQHGTVEGMSVGFSVAKDDYTIIPTGRIFKNIQALREISVCTFPANEQAGIAAMKSVDGIETIRDVENWLRDSVGLTKSQAVGLIARFKSAIRSESEGDGNEAQINALLQSIKSFPSNLGK</sequence>
<feature type="chain" id="PRO_0000065886" description="Prohead protease">
    <location>
        <begin position="1"/>
        <end position="225"/>
    </location>
</feature>
<feature type="active site" evidence="1">
    <location>
        <position position="65"/>
    </location>
</feature>
<feature type="active site" evidence="1">
    <location>
        <position position="114"/>
    </location>
</feature>
<feature type="active site" evidence="1">
    <location>
        <position position="141"/>
    </location>
</feature>
<accession>P49860</accession>
<gene>
    <name type="primary">4</name>
</gene>
<evidence type="ECO:0000250" key="1">
    <source>
        <dbReference type="UniProtKB" id="Q6QGD7"/>
    </source>
</evidence>
<evidence type="ECO:0000305" key="2"/>
<keyword id="KW-0378">Hydrolase</keyword>
<keyword id="KW-0426">Late protein</keyword>
<keyword id="KW-0645">Protease</keyword>
<keyword id="KW-0118">Viral capsid assembly</keyword>
<keyword id="KW-1273">Viral capsid maturation</keyword>
<keyword id="KW-1188">Viral release from host cell</keyword>
<keyword id="KW-0946">Virion</keyword>
<name>PRO_BPHK7</name>
<reference key="1">
    <citation type="journal article" date="1995" name="J. Mol. Biol.">
        <title>Genetic basis of bacteriophage HK97 prohead assembly.</title>
        <authorList>
            <person name="Duda R.L."/>
            <person name="Martincic K."/>
            <person name="Hendrix R.W."/>
        </authorList>
    </citation>
    <scope>NUCLEOTIDE SEQUENCE [GENOMIC DNA]</scope>
</reference>
<dbReference type="EMBL" id="U18319">
    <property type="protein sequence ID" value="AAA80203.1"/>
    <property type="molecule type" value="Genomic_DNA"/>
</dbReference>
<dbReference type="PIR" id="S54391">
    <property type="entry name" value="S54391"/>
</dbReference>
<dbReference type="RefSeq" id="NP_037700.1">
    <property type="nucleotide sequence ID" value="NC_002167.1"/>
</dbReference>
<dbReference type="DIP" id="DIP-60656N"/>
<dbReference type="IntAct" id="P49860">
    <property type="interactions" value="1"/>
</dbReference>
<dbReference type="MEROPS" id="S78.001"/>
<dbReference type="GeneID" id="1262531"/>
<dbReference type="KEGG" id="vg:1262531"/>
<dbReference type="GO" id="GO:0044423">
    <property type="term" value="C:virion component"/>
    <property type="evidence" value="ECO:0007669"/>
    <property type="project" value="UniProtKB-KW"/>
</dbReference>
<dbReference type="GO" id="GO:0008233">
    <property type="term" value="F:peptidase activity"/>
    <property type="evidence" value="ECO:0007669"/>
    <property type="project" value="UniProtKB-KW"/>
</dbReference>
<dbReference type="GO" id="GO:0006508">
    <property type="term" value="P:proteolysis"/>
    <property type="evidence" value="ECO:0007669"/>
    <property type="project" value="UniProtKB-KW"/>
</dbReference>
<dbReference type="GO" id="GO:0046797">
    <property type="term" value="P:viral procapsid maturation"/>
    <property type="evidence" value="ECO:0007669"/>
    <property type="project" value="UniProtKB-KW"/>
</dbReference>
<dbReference type="GO" id="GO:0019082">
    <property type="term" value="P:viral protein processing"/>
    <property type="evidence" value="ECO:0000315"/>
    <property type="project" value="CACAO"/>
</dbReference>
<dbReference type="InterPro" id="IPR054613">
    <property type="entry name" value="Peptidase_S78_dom"/>
</dbReference>
<dbReference type="InterPro" id="IPR006433">
    <property type="entry name" value="Prohead_protease"/>
</dbReference>
<dbReference type="NCBIfam" id="TIGR01543">
    <property type="entry name" value="proheadase_HK97"/>
    <property type="match status" value="1"/>
</dbReference>
<dbReference type="Pfam" id="PF04586">
    <property type="entry name" value="Peptidase_S78"/>
    <property type="match status" value="1"/>
</dbReference>
<dbReference type="SUPFAM" id="SSF50789">
    <property type="entry name" value="Herpes virus serine proteinase, assemblin"/>
    <property type="match status" value="1"/>
</dbReference>